<proteinExistence type="inferred from homology"/>
<sequence length="386" mass="42123">MNIHEYQAKEILSKYNVPIQPGIAILKYEDIDYAIDSLATDTFVIKAQIHAGGRKIGGGIKISNDKNEAKNLAKNMWGMNLVTPQTGPKGQKVQRIYIESAAKIKLELYLGAVIDRSNHCITFMASSEGGINIEEVAHTNPDKIIKVKINILTGIQPFHSRKIIFQLGLTGDLAKQMAKIMSAVYSMLINTDATQVEINPLIITLDDKLIALDAKINFDDSALFRQPLIQEMRDEDEEDQLELRATKADLSYVRMNGNIGCMVNGAGLAMATMDIIKLYGAEPANFLDVGGSADKERVAEALKIISSDQNVKGILINIFGGIMRCDIIAEGVLAAAKEINLSIPLVVRLAGTNFELGKEILSNSKLQIVAANDLDDAARKIVEAVS</sequence>
<evidence type="ECO:0000255" key="1">
    <source>
        <dbReference type="HAMAP-Rule" id="MF_00558"/>
    </source>
</evidence>
<gene>
    <name evidence="1" type="primary">sucC</name>
    <name type="ordered locus">OTT_1349</name>
</gene>
<reference key="1">
    <citation type="journal article" date="2008" name="DNA Res.">
        <title>The whole-genome sequencing of the obligate intracellular bacterium Orientia tsutsugamushi revealed massive gene amplification during reductive genome evolution.</title>
        <authorList>
            <person name="Nakayama K."/>
            <person name="Yamashita A."/>
            <person name="Kurokawa K."/>
            <person name="Morimoto T."/>
            <person name="Ogawa M."/>
            <person name="Fukuhara M."/>
            <person name="Urakami H."/>
            <person name="Ohnishi M."/>
            <person name="Uchiyama I."/>
            <person name="Ogura Y."/>
            <person name="Ooka T."/>
            <person name="Oshima K."/>
            <person name="Tamura A."/>
            <person name="Hattori M."/>
            <person name="Hayashi T."/>
        </authorList>
    </citation>
    <scope>NUCLEOTIDE SEQUENCE [LARGE SCALE GENOMIC DNA]</scope>
    <source>
        <strain>Ikeda</strain>
    </source>
</reference>
<comment type="function">
    <text evidence="1">Succinyl-CoA synthetase functions in the citric acid cycle (TCA), coupling the hydrolysis of succinyl-CoA to the synthesis of either ATP or GTP and thus represents the only step of substrate-level phosphorylation in the TCA. The beta subunit provides nucleotide specificity of the enzyme and binds the substrate succinate, while the binding sites for coenzyme A and phosphate are found in the alpha subunit.</text>
</comment>
<comment type="catalytic activity">
    <reaction evidence="1">
        <text>succinate + ATP + CoA = succinyl-CoA + ADP + phosphate</text>
        <dbReference type="Rhea" id="RHEA:17661"/>
        <dbReference type="ChEBI" id="CHEBI:30031"/>
        <dbReference type="ChEBI" id="CHEBI:30616"/>
        <dbReference type="ChEBI" id="CHEBI:43474"/>
        <dbReference type="ChEBI" id="CHEBI:57287"/>
        <dbReference type="ChEBI" id="CHEBI:57292"/>
        <dbReference type="ChEBI" id="CHEBI:456216"/>
        <dbReference type="EC" id="6.2.1.5"/>
    </reaction>
    <physiologicalReaction direction="right-to-left" evidence="1">
        <dbReference type="Rhea" id="RHEA:17663"/>
    </physiologicalReaction>
</comment>
<comment type="catalytic activity">
    <reaction evidence="1">
        <text>GTP + succinate + CoA = succinyl-CoA + GDP + phosphate</text>
        <dbReference type="Rhea" id="RHEA:22120"/>
        <dbReference type="ChEBI" id="CHEBI:30031"/>
        <dbReference type="ChEBI" id="CHEBI:37565"/>
        <dbReference type="ChEBI" id="CHEBI:43474"/>
        <dbReference type="ChEBI" id="CHEBI:57287"/>
        <dbReference type="ChEBI" id="CHEBI:57292"/>
        <dbReference type="ChEBI" id="CHEBI:58189"/>
    </reaction>
    <physiologicalReaction direction="right-to-left" evidence="1">
        <dbReference type="Rhea" id="RHEA:22122"/>
    </physiologicalReaction>
</comment>
<comment type="cofactor">
    <cofactor evidence="1">
        <name>Mg(2+)</name>
        <dbReference type="ChEBI" id="CHEBI:18420"/>
    </cofactor>
    <text evidence="1">Binds 1 Mg(2+) ion per subunit.</text>
</comment>
<comment type="pathway">
    <text evidence="1">Carbohydrate metabolism; tricarboxylic acid cycle; succinate from succinyl-CoA (ligase route): step 1/1.</text>
</comment>
<comment type="subunit">
    <text evidence="1">Heterotetramer of two alpha and two beta subunits.</text>
</comment>
<comment type="similarity">
    <text evidence="1">Belongs to the succinate/malate CoA ligase beta subunit family.</text>
</comment>
<accession>B3CTW0</accession>
<organism>
    <name type="scientific">Orientia tsutsugamushi (strain Ikeda)</name>
    <name type="common">Rickettsia tsutsugamushi</name>
    <dbReference type="NCBI Taxonomy" id="334380"/>
    <lineage>
        <taxon>Bacteria</taxon>
        <taxon>Pseudomonadati</taxon>
        <taxon>Pseudomonadota</taxon>
        <taxon>Alphaproteobacteria</taxon>
        <taxon>Rickettsiales</taxon>
        <taxon>Rickettsiaceae</taxon>
        <taxon>Rickettsieae</taxon>
        <taxon>Orientia</taxon>
    </lineage>
</organism>
<protein>
    <recommendedName>
        <fullName evidence="1">Succinate--CoA ligase [ADP-forming] subunit beta</fullName>
        <ecNumber evidence="1">6.2.1.5</ecNumber>
    </recommendedName>
    <alternativeName>
        <fullName evidence="1">Succinyl-CoA synthetase subunit beta</fullName>
        <shortName evidence="1">SCS-beta</shortName>
    </alternativeName>
</protein>
<keyword id="KW-0067">ATP-binding</keyword>
<keyword id="KW-0436">Ligase</keyword>
<keyword id="KW-0460">Magnesium</keyword>
<keyword id="KW-0479">Metal-binding</keyword>
<keyword id="KW-0547">Nucleotide-binding</keyword>
<keyword id="KW-0816">Tricarboxylic acid cycle</keyword>
<name>SUCC_ORITI</name>
<feature type="chain" id="PRO_1000129205" description="Succinate--CoA ligase [ADP-forming] subunit beta">
    <location>
        <begin position="1"/>
        <end position="386"/>
    </location>
</feature>
<feature type="binding site" evidence="1">
    <location>
        <position position="46"/>
    </location>
    <ligand>
        <name>ATP</name>
        <dbReference type="ChEBI" id="CHEBI:30616"/>
    </ligand>
</feature>
<feature type="binding site" evidence="1">
    <location>
        <position position="99"/>
    </location>
    <ligand>
        <name>ATP</name>
        <dbReference type="ChEBI" id="CHEBI:30616"/>
    </ligand>
</feature>
<feature type="binding site" evidence="1">
    <location>
        <position position="102"/>
    </location>
    <ligand>
        <name>ATP</name>
        <dbReference type="ChEBI" id="CHEBI:30616"/>
    </ligand>
</feature>
<feature type="binding site" evidence="1">
    <location>
        <position position="107"/>
    </location>
    <ligand>
        <name>ATP</name>
        <dbReference type="ChEBI" id="CHEBI:30616"/>
    </ligand>
</feature>
<feature type="binding site" evidence="1">
    <location>
        <position position="199"/>
    </location>
    <ligand>
        <name>Mg(2+)</name>
        <dbReference type="ChEBI" id="CHEBI:18420"/>
    </ligand>
</feature>
<feature type="binding site" evidence="1">
    <location>
        <position position="213"/>
    </location>
    <ligand>
        <name>Mg(2+)</name>
        <dbReference type="ChEBI" id="CHEBI:18420"/>
    </ligand>
</feature>
<feature type="binding site" evidence="1">
    <location>
        <position position="264"/>
    </location>
    <ligand>
        <name>substrate</name>
        <note>ligand shared with subunit alpha</note>
    </ligand>
</feature>
<feature type="binding site" evidence="1">
    <location>
        <begin position="321"/>
        <end position="323"/>
    </location>
    <ligand>
        <name>substrate</name>
        <note>ligand shared with subunit alpha</note>
    </ligand>
</feature>
<dbReference type="EC" id="6.2.1.5" evidence="1"/>
<dbReference type="EMBL" id="AP008981">
    <property type="protein sequence ID" value="BAG40807.1"/>
    <property type="molecule type" value="Genomic_DNA"/>
</dbReference>
<dbReference type="RefSeq" id="WP_012461855.1">
    <property type="nucleotide sequence ID" value="NC_010793.1"/>
</dbReference>
<dbReference type="SMR" id="B3CTW0"/>
<dbReference type="KEGG" id="ott:OTT_1349"/>
<dbReference type="HOGENOM" id="CLU_037430_0_2_5"/>
<dbReference type="OrthoDB" id="9802602at2"/>
<dbReference type="UniPathway" id="UPA00223">
    <property type="reaction ID" value="UER00999"/>
</dbReference>
<dbReference type="Proteomes" id="UP000001033">
    <property type="component" value="Chromosome"/>
</dbReference>
<dbReference type="GO" id="GO:0005829">
    <property type="term" value="C:cytosol"/>
    <property type="evidence" value="ECO:0007669"/>
    <property type="project" value="TreeGrafter"/>
</dbReference>
<dbReference type="GO" id="GO:0042709">
    <property type="term" value="C:succinate-CoA ligase complex"/>
    <property type="evidence" value="ECO:0007669"/>
    <property type="project" value="TreeGrafter"/>
</dbReference>
<dbReference type="GO" id="GO:0005524">
    <property type="term" value="F:ATP binding"/>
    <property type="evidence" value="ECO:0007669"/>
    <property type="project" value="UniProtKB-UniRule"/>
</dbReference>
<dbReference type="GO" id="GO:0000287">
    <property type="term" value="F:magnesium ion binding"/>
    <property type="evidence" value="ECO:0007669"/>
    <property type="project" value="UniProtKB-UniRule"/>
</dbReference>
<dbReference type="GO" id="GO:0004775">
    <property type="term" value="F:succinate-CoA ligase (ADP-forming) activity"/>
    <property type="evidence" value="ECO:0007669"/>
    <property type="project" value="UniProtKB-UniRule"/>
</dbReference>
<dbReference type="GO" id="GO:0004776">
    <property type="term" value="F:succinate-CoA ligase (GDP-forming) activity"/>
    <property type="evidence" value="ECO:0007669"/>
    <property type="project" value="RHEA"/>
</dbReference>
<dbReference type="GO" id="GO:0006104">
    <property type="term" value="P:succinyl-CoA metabolic process"/>
    <property type="evidence" value="ECO:0007669"/>
    <property type="project" value="TreeGrafter"/>
</dbReference>
<dbReference type="GO" id="GO:0006099">
    <property type="term" value="P:tricarboxylic acid cycle"/>
    <property type="evidence" value="ECO:0007669"/>
    <property type="project" value="UniProtKB-UniRule"/>
</dbReference>
<dbReference type="FunFam" id="3.30.1490.20:FF:000002">
    <property type="entry name" value="Succinate--CoA ligase [ADP-forming] subunit beta"/>
    <property type="match status" value="1"/>
</dbReference>
<dbReference type="FunFam" id="3.30.470.20:FF:000002">
    <property type="entry name" value="Succinate--CoA ligase [ADP-forming] subunit beta"/>
    <property type="match status" value="1"/>
</dbReference>
<dbReference type="FunFam" id="3.40.50.261:FF:000001">
    <property type="entry name" value="Succinate--CoA ligase [ADP-forming] subunit beta"/>
    <property type="match status" value="1"/>
</dbReference>
<dbReference type="Gene3D" id="3.30.1490.20">
    <property type="entry name" value="ATP-grasp fold, A domain"/>
    <property type="match status" value="1"/>
</dbReference>
<dbReference type="Gene3D" id="3.30.470.20">
    <property type="entry name" value="ATP-grasp fold, B domain"/>
    <property type="match status" value="1"/>
</dbReference>
<dbReference type="Gene3D" id="3.40.50.261">
    <property type="entry name" value="Succinyl-CoA synthetase domains"/>
    <property type="match status" value="1"/>
</dbReference>
<dbReference type="HAMAP" id="MF_00558">
    <property type="entry name" value="Succ_CoA_beta"/>
    <property type="match status" value="1"/>
</dbReference>
<dbReference type="InterPro" id="IPR013650">
    <property type="entry name" value="ATP-grasp_succ-CoA_synth-type"/>
</dbReference>
<dbReference type="InterPro" id="IPR013815">
    <property type="entry name" value="ATP_grasp_subdomain_1"/>
</dbReference>
<dbReference type="InterPro" id="IPR017866">
    <property type="entry name" value="Succ-CoA_synthase_bsu_CS"/>
</dbReference>
<dbReference type="InterPro" id="IPR005811">
    <property type="entry name" value="SUCC_ACL_C"/>
</dbReference>
<dbReference type="InterPro" id="IPR005809">
    <property type="entry name" value="Succ_CoA_ligase-like_bsu"/>
</dbReference>
<dbReference type="InterPro" id="IPR016102">
    <property type="entry name" value="Succinyl-CoA_synth-like"/>
</dbReference>
<dbReference type="NCBIfam" id="NF001913">
    <property type="entry name" value="PRK00696.1"/>
    <property type="match status" value="1"/>
</dbReference>
<dbReference type="NCBIfam" id="TIGR01016">
    <property type="entry name" value="sucCoAbeta"/>
    <property type="match status" value="1"/>
</dbReference>
<dbReference type="PANTHER" id="PTHR11815:SF10">
    <property type="entry name" value="SUCCINATE--COA LIGASE [GDP-FORMING] SUBUNIT BETA, MITOCHONDRIAL"/>
    <property type="match status" value="1"/>
</dbReference>
<dbReference type="PANTHER" id="PTHR11815">
    <property type="entry name" value="SUCCINYL-COA SYNTHETASE BETA CHAIN"/>
    <property type="match status" value="1"/>
</dbReference>
<dbReference type="Pfam" id="PF08442">
    <property type="entry name" value="ATP-grasp_2"/>
    <property type="match status" value="1"/>
</dbReference>
<dbReference type="Pfam" id="PF00549">
    <property type="entry name" value="Ligase_CoA"/>
    <property type="match status" value="1"/>
</dbReference>
<dbReference type="PIRSF" id="PIRSF001554">
    <property type="entry name" value="SucCS_beta"/>
    <property type="match status" value="1"/>
</dbReference>
<dbReference type="SUPFAM" id="SSF56059">
    <property type="entry name" value="Glutathione synthetase ATP-binding domain-like"/>
    <property type="match status" value="1"/>
</dbReference>
<dbReference type="SUPFAM" id="SSF52210">
    <property type="entry name" value="Succinyl-CoA synthetase domains"/>
    <property type="match status" value="1"/>
</dbReference>
<dbReference type="PROSITE" id="PS01217">
    <property type="entry name" value="SUCCINYL_COA_LIG_3"/>
    <property type="match status" value="1"/>
</dbReference>